<reference key="1">
    <citation type="journal article" date="2010" name="PLoS Genet.">
        <title>Genome sequence of the plant growth promoting endophytic bacterium Enterobacter sp. 638.</title>
        <authorList>
            <person name="Taghavi S."/>
            <person name="van der Lelie D."/>
            <person name="Hoffman A."/>
            <person name="Zhang Y.B."/>
            <person name="Walla M.D."/>
            <person name="Vangronsveld J."/>
            <person name="Newman L."/>
            <person name="Monchy S."/>
        </authorList>
    </citation>
    <scope>NUCLEOTIDE SEQUENCE [LARGE SCALE GENOMIC DNA]</scope>
    <source>
        <strain>638</strain>
    </source>
</reference>
<protein>
    <recommendedName>
        <fullName evidence="1">Protein ApaG</fullName>
    </recommendedName>
</protein>
<evidence type="ECO:0000255" key="1">
    <source>
        <dbReference type="HAMAP-Rule" id="MF_00791"/>
    </source>
</evidence>
<dbReference type="EMBL" id="CP000653">
    <property type="protein sequence ID" value="ABP59286.1"/>
    <property type="molecule type" value="Genomic_DNA"/>
</dbReference>
<dbReference type="RefSeq" id="WP_012016008.1">
    <property type="nucleotide sequence ID" value="NC_009436.1"/>
</dbReference>
<dbReference type="SMR" id="A4W6F6"/>
<dbReference type="STRING" id="399742.Ent638_0599"/>
<dbReference type="KEGG" id="ent:Ent638_0599"/>
<dbReference type="eggNOG" id="COG2967">
    <property type="taxonomic scope" value="Bacteria"/>
</dbReference>
<dbReference type="HOGENOM" id="CLU_128074_0_0_6"/>
<dbReference type="OrthoDB" id="9795226at2"/>
<dbReference type="Proteomes" id="UP000000230">
    <property type="component" value="Chromosome"/>
</dbReference>
<dbReference type="GO" id="GO:0070987">
    <property type="term" value="P:error-free translesion synthesis"/>
    <property type="evidence" value="ECO:0007669"/>
    <property type="project" value="TreeGrafter"/>
</dbReference>
<dbReference type="Gene3D" id="2.60.40.1470">
    <property type="entry name" value="ApaG domain"/>
    <property type="match status" value="1"/>
</dbReference>
<dbReference type="HAMAP" id="MF_00791">
    <property type="entry name" value="ApaG"/>
    <property type="match status" value="1"/>
</dbReference>
<dbReference type="InterPro" id="IPR007474">
    <property type="entry name" value="ApaG_domain"/>
</dbReference>
<dbReference type="InterPro" id="IPR036767">
    <property type="entry name" value="ApaG_sf"/>
</dbReference>
<dbReference type="InterPro" id="IPR023065">
    <property type="entry name" value="Uncharacterised_ApaG"/>
</dbReference>
<dbReference type="NCBIfam" id="NF003967">
    <property type="entry name" value="PRK05461.1"/>
    <property type="match status" value="1"/>
</dbReference>
<dbReference type="PANTHER" id="PTHR14289">
    <property type="entry name" value="F-BOX ONLY PROTEIN 3"/>
    <property type="match status" value="1"/>
</dbReference>
<dbReference type="PANTHER" id="PTHR14289:SF16">
    <property type="entry name" value="POLYMERASE DELTA-INTERACTING PROTEIN 2"/>
    <property type="match status" value="1"/>
</dbReference>
<dbReference type="Pfam" id="PF04379">
    <property type="entry name" value="DUF525"/>
    <property type="match status" value="1"/>
</dbReference>
<dbReference type="SUPFAM" id="SSF110069">
    <property type="entry name" value="ApaG-like"/>
    <property type="match status" value="1"/>
</dbReference>
<dbReference type="PROSITE" id="PS51087">
    <property type="entry name" value="APAG"/>
    <property type="match status" value="1"/>
</dbReference>
<organism>
    <name type="scientific">Enterobacter sp. (strain 638)</name>
    <dbReference type="NCBI Taxonomy" id="399742"/>
    <lineage>
        <taxon>Bacteria</taxon>
        <taxon>Pseudomonadati</taxon>
        <taxon>Pseudomonadota</taxon>
        <taxon>Gammaproteobacteria</taxon>
        <taxon>Enterobacterales</taxon>
        <taxon>Enterobacteriaceae</taxon>
        <taxon>Enterobacter</taxon>
    </lineage>
</organism>
<name>APAG_ENT38</name>
<proteinExistence type="inferred from homology"/>
<feature type="chain" id="PRO_1000083622" description="Protein ApaG">
    <location>
        <begin position="1"/>
        <end position="125"/>
    </location>
</feature>
<feature type="domain" description="ApaG" evidence="1">
    <location>
        <begin position="1"/>
        <end position="125"/>
    </location>
</feature>
<sequence>MIDSPRVCVQVQSVYIESQSTPDDERFVFAYTVTIRNLGRMPVQLLGRYWLITNGNGREIEVQGEGVVGEQPHIAPGEEFQYTSGAVIETPMGTMQGHYEMVDVDGNAFRVAVPVFRLAVPTFIH</sequence>
<accession>A4W6F6</accession>
<gene>
    <name evidence="1" type="primary">apaG</name>
    <name type="ordered locus">Ent638_0599</name>
</gene>